<keyword id="KW-0002">3D-structure</keyword>
<keyword id="KW-0378">Hydrolase</keyword>
<keyword id="KW-0479">Metal-binding</keyword>
<keyword id="KW-1185">Reference proteome</keyword>
<keyword id="KW-0862">Zinc</keyword>
<comment type="function">
    <text evidence="1">Catalyzes the deacetylation of 1D-myo-inositol 2-acetamido-2-deoxy-alpha-D-glucopyranoside (GlcNAc-Ins) in the mycothiol (MSH) biosynthesis pathway. Shows some amidase activity toward S-conjugates of mycothiol.</text>
</comment>
<comment type="catalytic activity">
    <reaction>
        <text>1D-myo-inositol 2-acetamido-2-deoxy-alpha-D-glucopyranoside + H2O = 1D-myo-inositol 2-amino-2-deoxy-alpha-D-glucopyranoside + acetate</text>
        <dbReference type="Rhea" id="RHEA:26180"/>
        <dbReference type="ChEBI" id="CHEBI:15377"/>
        <dbReference type="ChEBI" id="CHEBI:30089"/>
        <dbReference type="ChEBI" id="CHEBI:52442"/>
        <dbReference type="ChEBI" id="CHEBI:58886"/>
        <dbReference type="EC" id="3.5.1.103"/>
    </reaction>
</comment>
<comment type="cofactor">
    <cofactor evidence="2 4">
        <name>Zn(2+)</name>
        <dbReference type="ChEBI" id="CHEBI:29105"/>
    </cofactor>
    <text evidence="2 4">Binds 1 zinc ion per subunit.</text>
</comment>
<comment type="activity regulation">
    <text evidence="5">Partially inhibited by MSH when MSmB is used as substrate. Competitively inhibited by the GlcNAc-cyclohexyl derivative 5-(4-chlorophenyl)-N-((2R,3R,4R,5S,6R)-2-(cyclohexylthio)-tetrahydro-4,5-dihydroxy-6-(hydroxymethyl)-2H-pyran-3-yl)furan-2-carboxamide, which also inhibits Mca.</text>
</comment>
<comment type="biophysicochemical properties">
    <kinetics>
        <KM evidence="4">340 uM for GlcNAc-Ins</KM>
        <KM evidence="4">500 uM for MSmB</KM>
        <KM evidence="4">134 uM for CySmB-GlcNAc-Ins</KM>
        <Vmax evidence="4">960.0 nmol/min/mg enzyme with MSmB as substrate</Vmax>
        <Vmax evidence="4">330.0 nmol/min/mg enzyme with CySmB-GlcNAc-Ins as substrate</Vmax>
        <Vmax evidence="4">2820.0 nmol/min/mg enzyme with GlcNAc-Ins as substrate</Vmax>
        <text>MSmB is a monobromobimane derivative of mycothiol, CySmB-GlcNAc-Ins is a bimane derivative of mycothiol.</text>
    </kinetics>
</comment>
<comment type="subunit">
    <text evidence="2 3 4">Homodimer.</text>
</comment>
<comment type="biotechnology">
    <text evidence="5">MSH is a glutathione analog and is essential for this organism. As MSH does not exist in its host (human) enzymes that are required for its metabolism (such as this one) are potential therapeutic targets.</text>
</comment>
<comment type="miscellaneous">
    <text>Was identified as a high-confidence drug target.</text>
</comment>
<comment type="similarity">
    <text evidence="6">Belongs to the MshB deacetylase family.</text>
</comment>
<organism>
    <name type="scientific">Mycobacterium tuberculosis (strain ATCC 25618 / H37Rv)</name>
    <dbReference type="NCBI Taxonomy" id="83332"/>
    <lineage>
        <taxon>Bacteria</taxon>
        <taxon>Bacillati</taxon>
        <taxon>Actinomycetota</taxon>
        <taxon>Actinomycetes</taxon>
        <taxon>Mycobacteriales</taxon>
        <taxon>Mycobacteriaceae</taxon>
        <taxon>Mycobacterium</taxon>
        <taxon>Mycobacterium tuberculosis complex</taxon>
    </lineage>
</organism>
<proteinExistence type="evidence at protein level"/>
<evidence type="ECO:0000269" key="1">
    <source>
    </source>
</evidence>
<evidence type="ECO:0000269" key="2">
    <source>
    </source>
</evidence>
<evidence type="ECO:0000269" key="3">
    <source>
    </source>
</evidence>
<evidence type="ECO:0000269" key="4">
    <source>
    </source>
</evidence>
<evidence type="ECO:0000269" key="5">
    <source>
    </source>
</evidence>
<evidence type="ECO:0000305" key="6"/>
<evidence type="ECO:0007829" key="7">
    <source>
        <dbReference type="PDB" id="1Q74"/>
    </source>
</evidence>
<evidence type="ECO:0007829" key="8">
    <source>
        <dbReference type="PDB" id="1Q7T"/>
    </source>
</evidence>
<evidence type="ECO:0007829" key="9">
    <source>
        <dbReference type="PDB" id="4EWL"/>
    </source>
</evidence>
<dbReference type="EC" id="3.5.1.103"/>
<dbReference type="EMBL" id="AL123456">
    <property type="protein sequence ID" value="CCP43926.1"/>
    <property type="molecule type" value="Genomic_DNA"/>
</dbReference>
<dbReference type="PIR" id="B70875">
    <property type="entry name" value="B70875"/>
</dbReference>
<dbReference type="RefSeq" id="NP_215686.1">
    <property type="nucleotide sequence ID" value="NC_000962.3"/>
</dbReference>
<dbReference type="RefSeq" id="WP_003406154.1">
    <property type="nucleotide sequence ID" value="NZ_NVQJ01000025.1"/>
</dbReference>
<dbReference type="PDB" id="1Q74">
    <property type="method" value="X-ray"/>
    <property type="resolution" value="1.70 A"/>
    <property type="chains" value="A/B/C/D=1-303"/>
</dbReference>
<dbReference type="PDB" id="1Q7T">
    <property type="method" value="X-ray"/>
    <property type="resolution" value="1.90 A"/>
    <property type="chains" value="A/B=1-303"/>
</dbReference>
<dbReference type="PDB" id="4EWL">
    <property type="method" value="X-ray"/>
    <property type="resolution" value="1.85 A"/>
    <property type="chains" value="A/B=1-299"/>
</dbReference>
<dbReference type="PDBsum" id="1Q74"/>
<dbReference type="PDBsum" id="1Q7T"/>
<dbReference type="PDBsum" id="4EWL"/>
<dbReference type="SMR" id="P9WJN3"/>
<dbReference type="STRING" id="83332.Rv1170"/>
<dbReference type="BindingDB" id="P9WJN3"/>
<dbReference type="ChEMBL" id="CHEMBL6067"/>
<dbReference type="PaxDb" id="83332-Rv1170"/>
<dbReference type="GeneID" id="45425142"/>
<dbReference type="GeneID" id="885997"/>
<dbReference type="KEGG" id="mtu:Rv1170"/>
<dbReference type="KEGG" id="mtv:RVBD_1170"/>
<dbReference type="TubercuList" id="Rv1170"/>
<dbReference type="eggNOG" id="COG2120">
    <property type="taxonomic scope" value="Bacteria"/>
</dbReference>
<dbReference type="InParanoid" id="P9WJN3"/>
<dbReference type="OrthoDB" id="158614at2"/>
<dbReference type="PhylomeDB" id="P9WJN3"/>
<dbReference type="BioCyc" id="MetaCyc:G185E-5339-MONOMER"/>
<dbReference type="BRENDA" id="3.2.2.16">
    <property type="organism ID" value="3445"/>
</dbReference>
<dbReference type="BRENDA" id="3.5.1.103">
    <property type="organism ID" value="3445"/>
</dbReference>
<dbReference type="EvolutionaryTrace" id="P9WJN3"/>
<dbReference type="PRO" id="PR:P9WJN3"/>
<dbReference type="Proteomes" id="UP000001584">
    <property type="component" value="Chromosome"/>
</dbReference>
<dbReference type="GO" id="GO:0005886">
    <property type="term" value="C:plasma membrane"/>
    <property type="evidence" value="ECO:0007005"/>
    <property type="project" value="MTBBASE"/>
</dbReference>
<dbReference type="GO" id="GO:0016811">
    <property type="term" value="F:hydrolase activity, acting on carbon-nitrogen (but not peptide) bonds, in linear amides"/>
    <property type="evidence" value="ECO:0000314"/>
    <property type="project" value="MTBBASE"/>
</dbReference>
<dbReference type="GO" id="GO:0035595">
    <property type="term" value="F:N-acetylglucosaminylinositol deacetylase activity"/>
    <property type="evidence" value="ECO:0007669"/>
    <property type="project" value="UniProtKB-EC"/>
</dbReference>
<dbReference type="GO" id="GO:0008270">
    <property type="term" value="F:zinc ion binding"/>
    <property type="evidence" value="ECO:0000314"/>
    <property type="project" value="MTBBASE"/>
</dbReference>
<dbReference type="GO" id="GO:0010125">
    <property type="term" value="P:mycothiol biosynthetic process"/>
    <property type="evidence" value="ECO:0000314"/>
    <property type="project" value="MTBBASE"/>
</dbReference>
<dbReference type="Gene3D" id="3.40.50.10320">
    <property type="entry name" value="LmbE-like"/>
    <property type="match status" value="1"/>
</dbReference>
<dbReference type="HAMAP" id="MF_01696">
    <property type="entry name" value="MshB"/>
    <property type="match status" value="1"/>
</dbReference>
<dbReference type="InterPro" id="IPR003737">
    <property type="entry name" value="GlcNAc_PI_deacetylase-related"/>
</dbReference>
<dbReference type="InterPro" id="IPR024078">
    <property type="entry name" value="LmbE-like_dom_sf"/>
</dbReference>
<dbReference type="InterPro" id="IPR017810">
    <property type="entry name" value="Mycothiol_biosynthesis_MshB"/>
</dbReference>
<dbReference type="NCBIfam" id="TIGR03445">
    <property type="entry name" value="mycothiol_MshB"/>
    <property type="match status" value="1"/>
</dbReference>
<dbReference type="PANTHER" id="PTHR12993:SF26">
    <property type="entry name" value="1D-MYO-INOSITOL 2-ACETAMIDO-2-DEOXY-ALPHA-D-GLUCOPYRANOSIDE DEACETYLASE"/>
    <property type="match status" value="1"/>
</dbReference>
<dbReference type="PANTHER" id="PTHR12993">
    <property type="entry name" value="N-ACETYLGLUCOSAMINYL-PHOSPHATIDYLINOSITOL DE-N-ACETYLASE-RELATED"/>
    <property type="match status" value="1"/>
</dbReference>
<dbReference type="Pfam" id="PF02585">
    <property type="entry name" value="PIG-L"/>
    <property type="match status" value="1"/>
</dbReference>
<dbReference type="SUPFAM" id="SSF102588">
    <property type="entry name" value="LmbE-like"/>
    <property type="match status" value="1"/>
</dbReference>
<gene>
    <name type="primary">mshB</name>
    <name type="ordered locus">Rv1170</name>
</gene>
<feature type="chain" id="PRO_0000399826" description="1D-myo-inositol 2-acetamido-2-deoxy-alpha-D-glucopyranoside deacetylase">
    <location>
        <begin position="1"/>
        <end position="303"/>
    </location>
</feature>
<feature type="binding site" evidence="2">
    <location>
        <position position="13"/>
    </location>
    <ligand>
        <name>Zn(2+)</name>
        <dbReference type="ChEBI" id="CHEBI:29105"/>
    </ligand>
</feature>
<feature type="binding site" evidence="2">
    <location>
        <position position="16"/>
    </location>
    <ligand>
        <name>Zn(2+)</name>
        <dbReference type="ChEBI" id="CHEBI:29105"/>
    </ligand>
</feature>
<feature type="binding site" evidence="2">
    <location>
        <position position="147"/>
    </location>
    <ligand>
        <name>Zn(2+)</name>
        <dbReference type="ChEBI" id="CHEBI:29105"/>
    </ligand>
</feature>
<feature type="strand" evidence="7">
    <location>
        <begin position="6"/>
        <end position="13"/>
    </location>
</feature>
<feature type="helix" evidence="7">
    <location>
        <begin position="16"/>
        <end position="30"/>
    </location>
</feature>
<feature type="strand" evidence="7">
    <location>
        <begin position="34"/>
        <end position="40"/>
    </location>
</feature>
<feature type="strand" evidence="7">
    <location>
        <begin position="49"/>
        <end position="51"/>
    </location>
</feature>
<feature type="helix" evidence="7">
    <location>
        <begin position="54"/>
        <end position="56"/>
    </location>
</feature>
<feature type="turn" evidence="7">
    <location>
        <begin position="58"/>
        <end position="61"/>
    </location>
</feature>
<feature type="helix" evidence="7">
    <location>
        <begin position="64"/>
        <end position="78"/>
    </location>
</feature>
<feature type="strand" evidence="7">
    <location>
        <begin position="92"/>
        <end position="94"/>
    </location>
</feature>
<feature type="strand" evidence="8">
    <location>
        <begin position="98"/>
        <end position="101"/>
    </location>
</feature>
<feature type="helix" evidence="7">
    <location>
        <begin position="109"/>
        <end position="111"/>
    </location>
</feature>
<feature type="helix" evidence="7">
    <location>
        <begin position="114"/>
        <end position="128"/>
    </location>
</feature>
<feature type="strand" evidence="7">
    <location>
        <begin position="131"/>
        <end position="136"/>
    </location>
</feature>
<feature type="turn" evidence="7">
    <location>
        <begin position="138"/>
        <end position="142"/>
    </location>
</feature>
<feature type="helix" evidence="7">
    <location>
        <begin position="145"/>
        <end position="162"/>
    </location>
</feature>
<feature type="strand" evidence="9">
    <location>
        <begin position="168"/>
        <end position="171"/>
    </location>
</feature>
<feature type="strand" evidence="7">
    <location>
        <begin position="178"/>
        <end position="184"/>
    </location>
</feature>
<feature type="helix" evidence="7">
    <location>
        <begin position="187"/>
        <end position="196"/>
    </location>
</feature>
<feature type="helix" evidence="7">
    <location>
        <begin position="199"/>
        <end position="201"/>
    </location>
</feature>
<feature type="helix" evidence="7">
    <location>
        <begin position="211"/>
        <end position="213"/>
    </location>
</feature>
<feature type="strand" evidence="8">
    <location>
        <begin position="216"/>
        <end position="218"/>
    </location>
</feature>
<feature type="helix" evidence="7">
    <location>
        <begin position="220"/>
        <end position="222"/>
    </location>
</feature>
<feature type="strand" evidence="7">
    <location>
        <begin position="225"/>
        <end position="228"/>
    </location>
</feature>
<feature type="helix" evidence="7">
    <location>
        <begin position="231"/>
        <end position="243"/>
    </location>
</feature>
<feature type="turn" evidence="7">
    <location>
        <begin position="245"/>
        <end position="247"/>
    </location>
</feature>
<feature type="strand" evidence="7">
    <location>
        <begin position="254"/>
        <end position="258"/>
    </location>
</feature>
<feature type="strand" evidence="7">
    <location>
        <begin position="263"/>
        <end position="266"/>
    </location>
</feature>
<feature type="strand" evidence="7">
    <location>
        <begin position="269"/>
        <end position="278"/>
    </location>
</feature>
<feature type="turn" evidence="7">
    <location>
        <begin position="292"/>
        <end position="295"/>
    </location>
</feature>
<feature type="strand" evidence="8">
    <location>
        <begin position="298"/>
        <end position="300"/>
    </location>
</feature>
<sequence length="303" mass="31742">MSETPRLLFVHAHPDDESLSNGATIAHYTSRGAQVHVVTCTLGEEGEVIGDRWAQLTADHADQLGGYRIGELTAALRALGVSAPIYLGGAGRWRDSGMAGTDQRSQRRFVDADPRQTVGALVAIIRELRPHVVVTYDPNGGYGHPDHVHTHTVTTAAVAAAGVGSGTADHPGDPWTVPKFYWTVLGLSALISGARALVPDDLRPEWVLPRADEIAFGYSDDGIDAVVEADEQARAAKVAALAAHATQVVVGPTGRAAALSNNLALPILADEHYVLAGGSAGARDERGWETDLLAGLGFTASGT</sequence>
<accession>P9WJN3</accession>
<accession>L0T5W7</accession>
<accession>O50426</accession>
<accession>Q7D8Q0</accession>
<name>MSHB_MYCTU</name>
<protein>
    <recommendedName>
        <fullName>1D-myo-inositol 2-acetamido-2-deoxy-alpha-D-glucopyranoside deacetylase</fullName>
        <shortName>GlcNAc-Ins deacetylase</shortName>
        <ecNumber>3.5.1.103</ecNumber>
    </recommendedName>
    <alternativeName>
        <fullName>N-acetyl-1-D-myo-inositol 2-amino-2-deoxy-alpha-D-glucopyranoside deacetylase</fullName>
    </alternativeName>
</protein>
<reference key="1">
    <citation type="journal article" date="1998" name="Nature">
        <title>Deciphering the biology of Mycobacterium tuberculosis from the complete genome sequence.</title>
        <authorList>
            <person name="Cole S.T."/>
            <person name="Brosch R."/>
            <person name="Parkhill J."/>
            <person name="Garnier T."/>
            <person name="Churcher C.M."/>
            <person name="Harris D.E."/>
            <person name="Gordon S.V."/>
            <person name="Eiglmeier K."/>
            <person name="Gas S."/>
            <person name="Barry C.E. III"/>
            <person name="Tekaia F."/>
            <person name="Badcock K."/>
            <person name="Basham D."/>
            <person name="Brown D."/>
            <person name="Chillingworth T."/>
            <person name="Connor R."/>
            <person name="Davies R.M."/>
            <person name="Devlin K."/>
            <person name="Feltwell T."/>
            <person name="Gentles S."/>
            <person name="Hamlin N."/>
            <person name="Holroyd S."/>
            <person name="Hornsby T."/>
            <person name="Jagels K."/>
            <person name="Krogh A."/>
            <person name="McLean J."/>
            <person name="Moule S."/>
            <person name="Murphy L.D."/>
            <person name="Oliver S."/>
            <person name="Osborne J."/>
            <person name="Quail M.A."/>
            <person name="Rajandream M.A."/>
            <person name="Rogers J."/>
            <person name="Rutter S."/>
            <person name="Seeger K."/>
            <person name="Skelton S."/>
            <person name="Squares S."/>
            <person name="Squares R."/>
            <person name="Sulston J.E."/>
            <person name="Taylor K."/>
            <person name="Whitehead S."/>
            <person name="Barrell B.G."/>
        </authorList>
    </citation>
    <scope>NUCLEOTIDE SEQUENCE [LARGE SCALE GENOMIC DNA]</scope>
    <source>
        <strain>ATCC 25618 / H37Rv</strain>
    </source>
</reference>
<reference key="2">
    <citation type="journal article" date="2000" name="J. Bacteriol.">
        <title>N-Acetyl-1-D-myo-inosityl-2-amino-2-deoxy-alpha-D-glucopyranoside deacetylase (MshB) is a key enzyme in mycothiol biosynthesis.</title>
        <authorList>
            <person name="Newton G.L."/>
            <person name="Av-Gay Y."/>
            <person name="Fahey R.C."/>
        </authorList>
    </citation>
    <scope>FUNCTION</scope>
    <source>
        <strain>ATCC 25618 / H37Rv</strain>
    </source>
</reference>
<reference key="3">
    <citation type="journal article" date="2006" name="Protein Expr. Purif.">
        <title>Purification and characterization of Mycobacterium tuberculosis 1D-myo-inosityl-2-acetamido-2-deoxy-alpha-D-glucopyranoside deacetylase, MshB, a mycothiol biosynthetic enzyme.</title>
        <authorList>
            <person name="Newton G.L."/>
            <person name="Ko M."/>
            <person name="Ta P."/>
            <person name="Av-Gay Y."/>
            <person name="Fahey R.C."/>
        </authorList>
    </citation>
    <scope>BIOPHYSICOCHEMICAL PROPERTIES</scope>
    <scope>SUBSTRATE SPECIFICITY</scope>
    <scope>COFACTOR</scope>
    <scope>SUBUNIT</scope>
</reference>
<reference key="4">
    <citation type="journal article" date="2007" name="J. Med. Chem.">
        <title>Synthesis of natural product-inspired inhibitors of Mycobacterium tuberculosis mycothiol-associated enzymes: the first inhibitors of GlcNAc-Ins deacetylase.</title>
        <authorList>
            <person name="Metaferia B.B."/>
            <person name="Fetterolf B.J."/>
            <person name="Shazad-Ul-Hussan S."/>
            <person name="Moravec M."/>
            <person name="Smith J.A."/>
            <person name="Ray S."/>
            <person name="Gutierrez-Lugo M.T."/>
            <person name="Bewley C.A."/>
        </authorList>
    </citation>
    <scope>ACTIVITY REGULATION</scope>
    <scope>BIOTECHNOLOGY</scope>
</reference>
<reference key="5">
    <citation type="journal article" date="2008" name="BMC Syst. Biol.">
        <title>targetTB: a target identification pipeline for Mycobacterium tuberculosis through an interactome, reactome and genome-scale structural analysis.</title>
        <authorList>
            <person name="Raman K."/>
            <person name="Yeturu K."/>
            <person name="Chandra N."/>
        </authorList>
    </citation>
    <scope>IDENTIFICATION AS A DRUG TARGET [LARGE SCALE ANALYSIS]</scope>
</reference>
<reference key="6">
    <citation type="journal article" date="2011" name="Mol. Cell. Proteomics">
        <title>Proteogenomic analysis of Mycobacterium tuberculosis by high resolution mass spectrometry.</title>
        <authorList>
            <person name="Kelkar D.S."/>
            <person name="Kumar D."/>
            <person name="Kumar P."/>
            <person name="Balakrishnan L."/>
            <person name="Muthusamy B."/>
            <person name="Yadav A.K."/>
            <person name="Shrivastava P."/>
            <person name="Marimuthu A."/>
            <person name="Anand S."/>
            <person name="Sundaram H."/>
            <person name="Kingsbury R."/>
            <person name="Harsha H.C."/>
            <person name="Nair B."/>
            <person name="Prasad T.S."/>
            <person name="Chauhan D.S."/>
            <person name="Katoch K."/>
            <person name="Katoch V.M."/>
            <person name="Kumar P."/>
            <person name="Chaerkady R."/>
            <person name="Ramachandran S."/>
            <person name="Dash D."/>
            <person name="Pandey A."/>
        </authorList>
    </citation>
    <scope>IDENTIFICATION BY MASS SPECTROMETRY [LARGE SCALE ANALYSIS]</scope>
    <source>
        <strain>ATCC 25618 / H37Rv</strain>
    </source>
</reference>
<reference key="7">
    <citation type="journal article" date="2003" name="J. Biol. Chem.">
        <title>The crystal structure of 1-D-myo-inosityl 2-acetamido-2-deoxy-alpha-D-glucopyranoside deacetylase (MshB) from Mycobacterium tuberculosis reveals a zinc hydrolase with a lactate dehydrogenase fold.</title>
        <authorList>
            <person name="Maynes J.T."/>
            <person name="Garen C."/>
            <person name="Cherney M.M."/>
            <person name="Newton G."/>
            <person name="Arad D."/>
            <person name="Av-Gay Y."/>
            <person name="Fahey R.C."/>
            <person name="James M.N.G."/>
        </authorList>
    </citation>
    <scope>X-RAY CRYSTALLOGRAPHY (1.7 ANGSTROMS) IN COMPLEX WITH ZINC</scope>
    <scope>COFACTOR</scope>
    <scope>REACTION MECHANISM</scope>
</reference>
<reference key="8">
    <citation type="journal article" date="2004" name="J. Mol. Biol.">
        <title>Crystal structure of MshB from Mycobacterium tuberculosis, a deacetylase involved in mycothiol biosynthesis.</title>
        <authorList>
            <person name="McCarthy A.A."/>
            <person name="Peterson N.A."/>
            <person name="Knijff R."/>
            <person name="Baker E.N."/>
        </authorList>
    </citation>
    <scope>X-RAY CRYSTALLOGRAPHY (1.9 ANGSTROMS) IN COMPLEX WITH OCTYLGLUCOSIDE</scope>
</reference>